<evidence type="ECO:0000255" key="1">
    <source>
        <dbReference type="HAMAP-Rule" id="MF_00452"/>
    </source>
</evidence>
<feature type="chain" id="PRO_1000125048" description="Phosphoenolpyruvate carboxykinase [GTP]">
    <location>
        <begin position="1"/>
        <end position="618"/>
    </location>
</feature>
<feature type="active site" evidence="1">
    <location>
        <position position="266"/>
    </location>
</feature>
<feature type="binding site" evidence="1">
    <location>
        <position position="71"/>
    </location>
    <ligand>
        <name>substrate</name>
    </ligand>
</feature>
<feature type="binding site" evidence="1">
    <location>
        <begin position="213"/>
        <end position="215"/>
    </location>
    <ligand>
        <name>substrate</name>
    </ligand>
</feature>
<feature type="binding site" evidence="1">
    <location>
        <position position="222"/>
    </location>
    <ligand>
        <name>Mn(2+)</name>
        <dbReference type="ChEBI" id="CHEBI:29035"/>
    </ligand>
</feature>
<feature type="binding site" evidence="1">
    <location>
        <position position="242"/>
    </location>
    <ligand>
        <name>Mn(2+)</name>
        <dbReference type="ChEBI" id="CHEBI:29035"/>
    </ligand>
</feature>
<feature type="binding site" evidence="1">
    <location>
        <position position="264"/>
    </location>
    <ligand>
        <name>substrate</name>
    </ligand>
</feature>
<feature type="binding site" evidence="1">
    <location>
        <begin position="265"/>
        <end position="270"/>
    </location>
    <ligand>
        <name>GTP</name>
        <dbReference type="ChEBI" id="CHEBI:37565"/>
    </ligand>
</feature>
<feature type="binding site" evidence="1">
    <location>
        <position position="289"/>
    </location>
    <ligand>
        <name>Mn(2+)</name>
        <dbReference type="ChEBI" id="CHEBI:29035"/>
    </ligand>
</feature>
<feature type="binding site" evidence="1">
    <location>
        <begin position="385"/>
        <end position="387"/>
    </location>
    <ligand>
        <name>substrate</name>
    </ligand>
</feature>
<feature type="binding site" evidence="1">
    <location>
        <position position="387"/>
    </location>
    <ligand>
        <name>GTP</name>
        <dbReference type="ChEBI" id="CHEBI:37565"/>
    </ligand>
</feature>
<feature type="binding site" evidence="1">
    <location>
        <position position="418"/>
    </location>
    <ligand>
        <name>GTP</name>
        <dbReference type="ChEBI" id="CHEBI:37565"/>
    </ligand>
</feature>
<feature type="binding site" evidence="1">
    <location>
        <begin position="514"/>
        <end position="517"/>
    </location>
    <ligand>
        <name>GTP</name>
        <dbReference type="ChEBI" id="CHEBI:37565"/>
    </ligand>
</feature>
<accession>B2S270</accession>
<comment type="function">
    <text evidence="1">Catalyzes the conversion of oxaloacetate (OAA) to phosphoenolpyruvate (PEP).</text>
</comment>
<comment type="catalytic activity">
    <reaction evidence="1">
        <text>oxaloacetate + GTP = phosphoenolpyruvate + GDP + CO2</text>
        <dbReference type="Rhea" id="RHEA:10388"/>
        <dbReference type="ChEBI" id="CHEBI:16452"/>
        <dbReference type="ChEBI" id="CHEBI:16526"/>
        <dbReference type="ChEBI" id="CHEBI:37565"/>
        <dbReference type="ChEBI" id="CHEBI:58189"/>
        <dbReference type="ChEBI" id="CHEBI:58702"/>
        <dbReference type="EC" id="4.1.1.32"/>
    </reaction>
</comment>
<comment type="cofactor">
    <cofactor evidence="1">
        <name>Mn(2+)</name>
        <dbReference type="ChEBI" id="CHEBI:29035"/>
    </cofactor>
    <text evidence="1">Binds 1 Mn(2+) ion per subunit.</text>
</comment>
<comment type="pathway">
    <text evidence="1">Carbohydrate biosynthesis; gluconeogenesis.</text>
</comment>
<comment type="subunit">
    <text evidence="1">Monomer.</text>
</comment>
<comment type="subcellular location">
    <subcellularLocation>
        <location evidence="1">Cytoplasm</location>
    </subcellularLocation>
</comment>
<comment type="similarity">
    <text evidence="1">Belongs to the phosphoenolpyruvate carboxykinase [GTP] family.</text>
</comment>
<reference key="1">
    <citation type="journal article" date="2008" name="BMC Microbiol.">
        <title>Complete genome sequence of Treponema pallidum ssp. pallidum strain SS14 determined with oligonucleotide arrays.</title>
        <authorList>
            <person name="Matejkova P."/>
            <person name="Strouhal M."/>
            <person name="Smajs D."/>
            <person name="Norris S.J."/>
            <person name="Palzkill T."/>
            <person name="Petrosino J.F."/>
            <person name="Sodergren E."/>
            <person name="Norton J.E."/>
            <person name="Singh J."/>
            <person name="Richmond T.A."/>
            <person name="Molla M.N."/>
            <person name="Albert T.J."/>
            <person name="Weinstock G.M."/>
        </authorList>
    </citation>
    <scope>NUCLEOTIDE SEQUENCE [LARGE SCALE GENOMIC DNA]</scope>
    <source>
        <strain>SS14</strain>
    </source>
</reference>
<sequence>MELHEIAHARAKAWIEEMVALCAPDTVYVCDGSKKEYDTIMQKMVDAGLATPLKKRKNCFLFRSQPSDVARVEARTFIASKREDDAGPTNHWTDPAELKKTMTGLYSQCMKGRTMYVIPFSMGPVGSPISKNGIEITDSEYVVCNMHIMTRVGTRVLEALGTDGEFVPCLHSVGKPLGPGVTDAGQWPCADMERKYISHFPEERLVWSFGSGYGGNALLGKKCFALRIASVLARDEGWLAEHMLILKITNPAGKTKYIGAAFPSACGKTNLAMMIPTLPGWKVETVGDDIAWMKFGKDGRLYAINPEAGFFGVAPGTSDFSNKNAMDSIKENAIFTNCGLTEDGDVWWEGIGYPAKGTIIDWHGVSRPAPTRDKSPKGEEIAHPNARFTAPARQCPAIASNWEDPEGVPIDAFLFGGRRPSTVPLVHQARDWNHGVFLGSIIGSEVTAAVISDQVGQIRRDPFAMLPFCGYHMADYFSHWIKLGSQARAENLPKIFCVNWFRKDAEGNFLWPGYGDNSRVLAWIFDRCDGVDNAVETAIGWMPKEGALNTEGLNVSTQAVKELLSVDIAGWKKEIKDIRENHYPKFGARLPQQLRDALEVLEARINGSEGAACTRDMC</sequence>
<name>PCKG_TREPS</name>
<keyword id="KW-0963">Cytoplasm</keyword>
<keyword id="KW-0210">Decarboxylase</keyword>
<keyword id="KW-0312">Gluconeogenesis</keyword>
<keyword id="KW-0342">GTP-binding</keyword>
<keyword id="KW-0456">Lyase</keyword>
<keyword id="KW-0464">Manganese</keyword>
<keyword id="KW-0479">Metal-binding</keyword>
<keyword id="KW-0547">Nucleotide-binding</keyword>
<organism>
    <name type="scientific">Treponema pallidum subsp. pallidum (strain SS14)</name>
    <dbReference type="NCBI Taxonomy" id="455434"/>
    <lineage>
        <taxon>Bacteria</taxon>
        <taxon>Pseudomonadati</taxon>
        <taxon>Spirochaetota</taxon>
        <taxon>Spirochaetia</taxon>
        <taxon>Spirochaetales</taxon>
        <taxon>Treponemataceae</taxon>
        <taxon>Treponema</taxon>
    </lineage>
</organism>
<dbReference type="EC" id="4.1.1.32" evidence="1"/>
<dbReference type="EMBL" id="CP000805">
    <property type="protein sequence ID" value="ACD70549.1"/>
    <property type="molecule type" value="Genomic_DNA"/>
</dbReference>
<dbReference type="RefSeq" id="WP_010881571.1">
    <property type="nucleotide sequence ID" value="NC_021508.1"/>
</dbReference>
<dbReference type="SMR" id="B2S270"/>
<dbReference type="KEGG" id="tpp:TPASS_0122"/>
<dbReference type="PATRIC" id="fig|455434.6.peg.125"/>
<dbReference type="UniPathway" id="UPA00138"/>
<dbReference type="Proteomes" id="UP000001202">
    <property type="component" value="Chromosome"/>
</dbReference>
<dbReference type="GO" id="GO:0005829">
    <property type="term" value="C:cytosol"/>
    <property type="evidence" value="ECO:0007669"/>
    <property type="project" value="TreeGrafter"/>
</dbReference>
<dbReference type="GO" id="GO:0005525">
    <property type="term" value="F:GTP binding"/>
    <property type="evidence" value="ECO:0007669"/>
    <property type="project" value="UniProtKB-UniRule"/>
</dbReference>
<dbReference type="GO" id="GO:0030145">
    <property type="term" value="F:manganese ion binding"/>
    <property type="evidence" value="ECO:0007669"/>
    <property type="project" value="UniProtKB-UniRule"/>
</dbReference>
<dbReference type="GO" id="GO:0004613">
    <property type="term" value="F:phosphoenolpyruvate carboxykinase (GTP) activity"/>
    <property type="evidence" value="ECO:0007669"/>
    <property type="project" value="UniProtKB-UniRule"/>
</dbReference>
<dbReference type="GO" id="GO:0071333">
    <property type="term" value="P:cellular response to glucose stimulus"/>
    <property type="evidence" value="ECO:0007669"/>
    <property type="project" value="TreeGrafter"/>
</dbReference>
<dbReference type="GO" id="GO:0006094">
    <property type="term" value="P:gluconeogenesis"/>
    <property type="evidence" value="ECO:0007669"/>
    <property type="project" value="UniProtKB-UniRule"/>
</dbReference>
<dbReference type="GO" id="GO:0046327">
    <property type="term" value="P:glycerol biosynthetic process from pyruvate"/>
    <property type="evidence" value="ECO:0007669"/>
    <property type="project" value="TreeGrafter"/>
</dbReference>
<dbReference type="GO" id="GO:0006107">
    <property type="term" value="P:oxaloacetate metabolic process"/>
    <property type="evidence" value="ECO:0007669"/>
    <property type="project" value="TreeGrafter"/>
</dbReference>
<dbReference type="GO" id="GO:0019543">
    <property type="term" value="P:propionate catabolic process"/>
    <property type="evidence" value="ECO:0007669"/>
    <property type="project" value="TreeGrafter"/>
</dbReference>
<dbReference type="GO" id="GO:0033993">
    <property type="term" value="P:response to lipid"/>
    <property type="evidence" value="ECO:0007669"/>
    <property type="project" value="TreeGrafter"/>
</dbReference>
<dbReference type="GO" id="GO:0042594">
    <property type="term" value="P:response to starvation"/>
    <property type="evidence" value="ECO:0007669"/>
    <property type="project" value="TreeGrafter"/>
</dbReference>
<dbReference type="CDD" id="cd00819">
    <property type="entry name" value="PEPCK_GTP"/>
    <property type="match status" value="1"/>
</dbReference>
<dbReference type="FunFam" id="3.40.449.10:FF:000005">
    <property type="entry name" value="Phosphoenolpyruvate carboxykinase [GTP]"/>
    <property type="match status" value="1"/>
</dbReference>
<dbReference type="Gene3D" id="3.90.228.20">
    <property type="match status" value="1"/>
</dbReference>
<dbReference type="Gene3D" id="3.40.449.10">
    <property type="entry name" value="Phosphoenolpyruvate Carboxykinase, domain 1"/>
    <property type="match status" value="1"/>
</dbReference>
<dbReference type="Gene3D" id="2.170.8.10">
    <property type="entry name" value="Phosphoenolpyruvate Carboxykinase, domain 2"/>
    <property type="match status" value="1"/>
</dbReference>
<dbReference type="HAMAP" id="MF_00452">
    <property type="entry name" value="PEPCK_GTP"/>
    <property type="match status" value="1"/>
</dbReference>
<dbReference type="InterPro" id="IPR018091">
    <property type="entry name" value="PEP_carboxykin_GTP_CS"/>
</dbReference>
<dbReference type="InterPro" id="IPR013035">
    <property type="entry name" value="PEP_carboxykinase_C"/>
</dbReference>
<dbReference type="InterPro" id="IPR008209">
    <property type="entry name" value="PEP_carboxykinase_GTP"/>
</dbReference>
<dbReference type="InterPro" id="IPR035077">
    <property type="entry name" value="PEP_carboxykinase_GTP_C"/>
</dbReference>
<dbReference type="InterPro" id="IPR035078">
    <property type="entry name" value="PEP_carboxykinase_GTP_N"/>
</dbReference>
<dbReference type="InterPro" id="IPR008210">
    <property type="entry name" value="PEP_carboxykinase_N"/>
</dbReference>
<dbReference type="NCBIfam" id="NF003253">
    <property type="entry name" value="PRK04210.1"/>
    <property type="match status" value="1"/>
</dbReference>
<dbReference type="PANTHER" id="PTHR11561">
    <property type="entry name" value="PHOSPHOENOLPYRUVATE CARBOXYKINASE"/>
    <property type="match status" value="1"/>
</dbReference>
<dbReference type="PANTHER" id="PTHR11561:SF0">
    <property type="entry name" value="PHOSPHOENOLPYRUVATE CARBOXYKINASE [GTP]-RELATED"/>
    <property type="match status" value="1"/>
</dbReference>
<dbReference type="Pfam" id="PF00821">
    <property type="entry name" value="PEPCK_GTP"/>
    <property type="match status" value="1"/>
</dbReference>
<dbReference type="Pfam" id="PF17297">
    <property type="entry name" value="PEPCK_N"/>
    <property type="match status" value="1"/>
</dbReference>
<dbReference type="PIRSF" id="PIRSF001348">
    <property type="entry name" value="PEP_carboxykinase_GTP"/>
    <property type="match status" value="1"/>
</dbReference>
<dbReference type="SUPFAM" id="SSF68923">
    <property type="entry name" value="PEP carboxykinase N-terminal domain"/>
    <property type="match status" value="1"/>
</dbReference>
<dbReference type="SUPFAM" id="SSF53795">
    <property type="entry name" value="PEP carboxykinase-like"/>
    <property type="match status" value="1"/>
</dbReference>
<dbReference type="PROSITE" id="PS00505">
    <property type="entry name" value="PEPCK_GTP"/>
    <property type="match status" value="1"/>
</dbReference>
<gene>
    <name evidence="1" type="primary">pckG</name>
    <name type="ordered locus">TPASS_0122</name>
</gene>
<proteinExistence type="inferred from homology"/>
<protein>
    <recommendedName>
        <fullName evidence="1">Phosphoenolpyruvate carboxykinase [GTP]</fullName>
        <shortName evidence="1">PEP carboxykinase</shortName>
        <shortName evidence="1">PEPCK</shortName>
        <ecNumber evidence="1">4.1.1.32</ecNumber>
    </recommendedName>
    <alternativeName>
        <fullName evidence="1">GTP-dependent phosphoenolpyruvate carboxykinase</fullName>
        <shortName evidence="1">GTP-PEPCK</shortName>
    </alternativeName>
</protein>